<feature type="signal peptide" evidence="1">
    <location>
        <begin position="1"/>
        <end position="20"/>
    </location>
</feature>
<feature type="chain" id="PRO_0000018796" description="Beta-2-microglobulin">
    <location>
        <begin position="21"/>
        <end position="119"/>
    </location>
</feature>
<feature type="domain" description="Ig-like C1-type">
    <location>
        <begin position="25"/>
        <end position="114"/>
    </location>
</feature>
<feature type="disulfide bond" evidence="2">
    <location>
        <begin position="45"/>
        <end position="100"/>
    </location>
</feature>
<accession>O77517</accession>
<proteinExistence type="inferred from homology"/>
<keyword id="KW-1015">Disulfide bond</keyword>
<keyword id="KW-0391">Immunity</keyword>
<keyword id="KW-0393">Immunoglobulin domain</keyword>
<keyword id="KW-0490">MHC I</keyword>
<keyword id="KW-0964">Secreted</keyword>
<keyword id="KW-0732">Signal</keyword>
<name>B2MG_SAGMN</name>
<evidence type="ECO:0000250" key="1"/>
<evidence type="ECO:0000255" key="2">
    <source>
        <dbReference type="PROSITE-ProRule" id="PRU00114"/>
    </source>
</evidence>
<evidence type="ECO:0000305" key="3"/>
<comment type="function">
    <text evidence="1">Component of the class I major histocompatibility complex (MHC). Involved in the presentation of peptide antigens to the immune system (By similarity).</text>
</comment>
<comment type="subunit">
    <text evidence="1">Heterodimer of an alpha chain and a beta chain. Beta-2-microglobulin is the beta-chain of major histocompatibility complex class I molecules (By similarity).</text>
</comment>
<comment type="subcellular location">
    <subcellularLocation>
        <location evidence="1">Secreted</location>
    </subcellularLocation>
</comment>
<comment type="similarity">
    <text evidence="3">Belongs to the beta-2-microglobulin family.</text>
</comment>
<gene>
    <name type="primary">B2M</name>
</gene>
<reference key="1">
    <citation type="journal article" date="1998" name="Immunogenetics">
        <title>Beta-2-microglobulin in neotropical primates (Platyrrhini).</title>
        <authorList>
            <person name="Canavez F.C."/>
            <person name="Ladasky J.J."/>
            <person name="Muniz J.A.P.C."/>
            <person name="Seuanez H.N."/>
            <person name="Parham P."/>
        </authorList>
    </citation>
    <scope>NUCLEOTIDE SEQUENCE [GENOMIC DNA]</scope>
    <source>
        <tissue>Blood</tissue>
    </source>
</reference>
<sequence length="119" mass="13885">MARFVVVPLFVLLSLFGLEAIQHPPKIQVYSRYPADNGKPNFLNCYVSGFHPSDIEVDLLKNGKKIEKVEHSDLSFSKDWSFYLLYYTEFTPNEKDEYACRVSHVTFSTPKTVKWDRNM</sequence>
<protein>
    <recommendedName>
        <fullName>Beta-2-microglobulin</fullName>
    </recommendedName>
</protein>
<dbReference type="EMBL" id="AF032028">
    <property type="protein sequence ID" value="AAC24720.1"/>
    <property type="molecule type" value="Genomic_DNA"/>
</dbReference>
<dbReference type="EMBL" id="AF032026">
    <property type="protein sequence ID" value="AAC24720.1"/>
    <property type="status" value="JOINED"/>
    <property type="molecule type" value="Genomic_DNA"/>
</dbReference>
<dbReference type="EMBL" id="AF032027">
    <property type="protein sequence ID" value="AAC24720.1"/>
    <property type="status" value="JOINED"/>
    <property type="molecule type" value="Genomic_DNA"/>
</dbReference>
<dbReference type="BMRB" id="O77517"/>
<dbReference type="SMR" id="O77517"/>
<dbReference type="GO" id="GO:0005576">
    <property type="term" value="C:extracellular region"/>
    <property type="evidence" value="ECO:0007669"/>
    <property type="project" value="UniProtKB-SubCell"/>
</dbReference>
<dbReference type="GO" id="GO:0042612">
    <property type="term" value="C:MHC class I protein complex"/>
    <property type="evidence" value="ECO:0007669"/>
    <property type="project" value="UniProtKB-KW"/>
</dbReference>
<dbReference type="GO" id="GO:0002474">
    <property type="term" value="P:antigen processing and presentation of peptide antigen via MHC class I"/>
    <property type="evidence" value="ECO:0007669"/>
    <property type="project" value="UniProtKB-KW"/>
</dbReference>
<dbReference type="GO" id="GO:0006955">
    <property type="term" value="P:immune response"/>
    <property type="evidence" value="ECO:0007669"/>
    <property type="project" value="InterPro"/>
</dbReference>
<dbReference type="CDD" id="cd05770">
    <property type="entry name" value="IgC1_beta2m"/>
    <property type="match status" value="1"/>
</dbReference>
<dbReference type="FunFam" id="2.60.40.10:FF:001005">
    <property type="entry name" value="Beta-2-microglobulin"/>
    <property type="match status" value="1"/>
</dbReference>
<dbReference type="Gene3D" id="2.60.40.10">
    <property type="entry name" value="Immunoglobulins"/>
    <property type="match status" value="1"/>
</dbReference>
<dbReference type="InterPro" id="IPR015707">
    <property type="entry name" value="B2Microglobulin"/>
</dbReference>
<dbReference type="InterPro" id="IPR007110">
    <property type="entry name" value="Ig-like_dom"/>
</dbReference>
<dbReference type="InterPro" id="IPR036179">
    <property type="entry name" value="Ig-like_dom_sf"/>
</dbReference>
<dbReference type="InterPro" id="IPR013783">
    <property type="entry name" value="Ig-like_fold"/>
</dbReference>
<dbReference type="InterPro" id="IPR003006">
    <property type="entry name" value="Ig/MHC_CS"/>
</dbReference>
<dbReference type="InterPro" id="IPR003597">
    <property type="entry name" value="Ig_C1-set"/>
</dbReference>
<dbReference type="InterPro" id="IPR050160">
    <property type="entry name" value="MHC/Immunoglobulin"/>
</dbReference>
<dbReference type="PANTHER" id="PTHR19944:SF62">
    <property type="entry name" value="BETA-2-MICROGLOBULIN"/>
    <property type="match status" value="1"/>
</dbReference>
<dbReference type="PANTHER" id="PTHR19944">
    <property type="entry name" value="MHC CLASS II-RELATED"/>
    <property type="match status" value="1"/>
</dbReference>
<dbReference type="Pfam" id="PF07654">
    <property type="entry name" value="C1-set"/>
    <property type="match status" value="1"/>
</dbReference>
<dbReference type="SMART" id="SM00407">
    <property type="entry name" value="IGc1"/>
    <property type="match status" value="1"/>
</dbReference>
<dbReference type="SUPFAM" id="SSF48726">
    <property type="entry name" value="Immunoglobulin"/>
    <property type="match status" value="1"/>
</dbReference>
<dbReference type="PROSITE" id="PS50835">
    <property type="entry name" value="IG_LIKE"/>
    <property type="match status" value="1"/>
</dbReference>
<dbReference type="PROSITE" id="PS00290">
    <property type="entry name" value="IG_MHC"/>
    <property type="match status" value="1"/>
</dbReference>
<organism>
    <name type="scientific">Saguinus niger</name>
    <name type="common">Black tamarin</name>
    <name type="synonym">Saguinus midas niger</name>
    <dbReference type="NCBI Taxonomy" id="356665"/>
    <lineage>
        <taxon>Eukaryota</taxon>
        <taxon>Metazoa</taxon>
        <taxon>Chordata</taxon>
        <taxon>Craniata</taxon>
        <taxon>Vertebrata</taxon>
        <taxon>Euteleostomi</taxon>
        <taxon>Mammalia</taxon>
        <taxon>Eutheria</taxon>
        <taxon>Euarchontoglires</taxon>
        <taxon>Primates</taxon>
        <taxon>Haplorrhini</taxon>
        <taxon>Platyrrhini</taxon>
        <taxon>Cebidae</taxon>
        <taxon>Callitrichinae</taxon>
        <taxon>Saguinus</taxon>
    </lineage>
</organism>